<reference key="1">
    <citation type="journal article" date="2014" name="Nat. Commun.">
        <title>Functional and molecular features of the calmodulin-interacting protein IQCG required for haematopoiesis in zebrafish.</title>
        <authorList>
            <person name="Chen L.T."/>
            <person name="Liang W.X."/>
            <person name="Chen S."/>
            <person name="Li R.K."/>
            <person name="Tan J.L."/>
            <person name="Xu P.F."/>
            <person name="Luo L.F."/>
            <person name="Wang L."/>
            <person name="Yu S.H."/>
            <person name="Meng G."/>
            <person name="Li K.K."/>
            <person name="Liu T.X."/>
            <person name="Chen Z."/>
            <person name="Chen S.J."/>
        </authorList>
    </citation>
    <scope>NUCLEOTIDE SEQUENCE [MRNA]</scope>
    <scope>FUNCTION</scope>
    <scope>INTERACTION WITH CALMODULIN AND HSP70</scope>
    <scope>IDENTIFICATION IN A COMPLEX WITH HSP70 AND CAMK4</scope>
    <scope>DOMAIN</scope>
    <scope>DISRUPTION PHENOTYPE</scope>
    <scope>TISSUE SPECIFICITY</scope>
    <scope>MUTAGENESIS OF GLN-313</scope>
</reference>
<reference key="2">
    <citation type="journal article" date="2013" name="Nature">
        <title>The zebrafish reference genome sequence and its relationship to the human genome.</title>
        <authorList>
            <person name="Howe K."/>
            <person name="Clark M.D."/>
            <person name="Torroja C.F."/>
            <person name="Torrance J."/>
            <person name="Berthelot C."/>
            <person name="Muffato M."/>
            <person name="Collins J.E."/>
            <person name="Humphray S."/>
            <person name="McLaren K."/>
            <person name="Matthews L."/>
            <person name="McLaren S."/>
            <person name="Sealy I."/>
            <person name="Caccamo M."/>
            <person name="Churcher C."/>
            <person name="Scott C."/>
            <person name="Barrett J.C."/>
            <person name="Koch R."/>
            <person name="Rauch G.J."/>
            <person name="White S."/>
            <person name="Chow W."/>
            <person name="Kilian B."/>
            <person name="Quintais L.T."/>
            <person name="Guerra-Assuncao J.A."/>
            <person name="Zhou Y."/>
            <person name="Gu Y."/>
            <person name="Yen J."/>
            <person name="Vogel J.H."/>
            <person name="Eyre T."/>
            <person name="Redmond S."/>
            <person name="Banerjee R."/>
            <person name="Chi J."/>
            <person name="Fu B."/>
            <person name="Langley E."/>
            <person name="Maguire S.F."/>
            <person name="Laird G.K."/>
            <person name="Lloyd D."/>
            <person name="Kenyon E."/>
            <person name="Donaldson S."/>
            <person name="Sehra H."/>
            <person name="Almeida-King J."/>
            <person name="Loveland J."/>
            <person name="Trevanion S."/>
            <person name="Jones M."/>
            <person name="Quail M."/>
            <person name="Willey D."/>
            <person name="Hunt A."/>
            <person name="Burton J."/>
            <person name="Sims S."/>
            <person name="McLay K."/>
            <person name="Plumb B."/>
            <person name="Davis J."/>
            <person name="Clee C."/>
            <person name="Oliver K."/>
            <person name="Clark R."/>
            <person name="Riddle C."/>
            <person name="Elliot D."/>
            <person name="Threadgold G."/>
            <person name="Harden G."/>
            <person name="Ware D."/>
            <person name="Begum S."/>
            <person name="Mortimore B."/>
            <person name="Kerry G."/>
            <person name="Heath P."/>
            <person name="Phillimore B."/>
            <person name="Tracey A."/>
            <person name="Corby N."/>
            <person name="Dunn M."/>
            <person name="Johnson C."/>
            <person name="Wood J."/>
            <person name="Clark S."/>
            <person name="Pelan S."/>
            <person name="Griffiths G."/>
            <person name="Smith M."/>
            <person name="Glithero R."/>
            <person name="Howden P."/>
            <person name="Barker N."/>
            <person name="Lloyd C."/>
            <person name="Stevens C."/>
            <person name="Harley J."/>
            <person name="Holt K."/>
            <person name="Panagiotidis G."/>
            <person name="Lovell J."/>
            <person name="Beasley H."/>
            <person name="Henderson C."/>
            <person name="Gordon D."/>
            <person name="Auger K."/>
            <person name="Wright D."/>
            <person name="Collins J."/>
            <person name="Raisen C."/>
            <person name="Dyer L."/>
            <person name="Leung K."/>
            <person name="Robertson L."/>
            <person name="Ambridge K."/>
            <person name="Leongamornlert D."/>
            <person name="McGuire S."/>
            <person name="Gilderthorp R."/>
            <person name="Griffiths C."/>
            <person name="Manthravadi D."/>
            <person name="Nichol S."/>
            <person name="Barker G."/>
            <person name="Whitehead S."/>
            <person name="Kay M."/>
            <person name="Brown J."/>
            <person name="Murnane C."/>
            <person name="Gray E."/>
            <person name="Humphries M."/>
            <person name="Sycamore N."/>
            <person name="Barker D."/>
            <person name="Saunders D."/>
            <person name="Wallis J."/>
            <person name="Babbage A."/>
            <person name="Hammond S."/>
            <person name="Mashreghi-Mohammadi M."/>
            <person name="Barr L."/>
            <person name="Martin S."/>
            <person name="Wray P."/>
            <person name="Ellington A."/>
            <person name="Matthews N."/>
            <person name="Ellwood M."/>
            <person name="Woodmansey R."/>
            <person name="Clark G."/>
            <person name="Cooper J."/>
            <person name="Tromans A."/>
            <person name="Grafham D."/>
            <person name="Skuce C."/>
            <person name="Pandian R."/>
            <person name="Andrews R."/>
            <person name="Harrison E."/>
            <person name="Kimberley A."/>
            <person name="Garnett J."/>
            <person name="Fosker N."/>
            <person name="Hall R."/>
            <person name="Garner P."/>
            <person name="Kelly D."/>
            <person name="Bird C."/>
            <person name="Palmer S."/>
            <person name="Gehring I."/>
            <person name="Berger A."/>
            <person name="Dooley C.M."/>
            <person name="Ersan-Urun Z."/>
            <person name="Eser C."/>
            <person name="Geiger H."/>
            <person name="Geisler M."/>
            <person name="Karotki L."/>
            <person name="Kirn A."/>
            <person name="Konantz J."/>
            <person name="Konantz M."/>
            <person name="Oberlander M."/>
            <person name="Rudolph-Geiger S."/>
            <person name="Teucke M."/>
            <person name="Lanz C."/>
            <person name="Raddatz G."/>
            <person name="Osoegawa K."/>
            <person name="Zhu B."/>
            <person name="Rapp A."/>
            <person name="Widaa S."/>
            <person name="Langford C."/>
            <person name="Yang F."/>
            <person name="Schuster S.C."/>
            <person name="Carter N.P."/>
            <person name="Harrow J."/>
            <person name="Ning Z."/>
            <person name="Herrero J."/>
            <person name="Searle S.M."/>
            <person name="Enright A."/>
            <person name="Geisler R."/>
            <person name="Plasterk R.H."/>
            <person name="Lee C."/>
            <person name="Westerfield M."/>
            <person name="de Jong P.J."/>
            <person name="Zon L.I."/>
            <person name="Postlethwait J.H."/>
            <person name="Nusslein-Volhard C."/>
            <person name="Hubbard T.J."/>
            <person name="Roest Crollius H."/>
            <person name="Rogers J."/>
            <person name="Stemple D.L."/>
        </authorList>
    </citation>
    <scope>NUCLEOTIDE SEQUENCE [LARGE SCALE GENOMIC DNA]</scope>
    <source>
        <strain>Tuebingen</strain>
    </source>
</reference>
<reference key="3">
    <citation type="journal article" date="2004" name="Comp. Funct. Genomics">
        <title>Comparative analysis of the testis and ovary transcriptomes in zebrafish by combining experimental and computational tools.</title>
        <authorList>
            <person name="Li Y."/>
            <person name="Chia J.M."/>
            <person name="Bartfai R."/>
            <person name="Christoffels A."/>
            <person name="Yue G.H."/>
            <person name="Ding K."/>
            <person name="Ho M.Y."/>
            <person name="Hill J.A."/>
            <person name="Stupka E."/>
            <person name="Orban L."/>
        </authorList>
    </citation>
    <scope>NUCLEOTIDE SEQUENCE [LARGE SCALE MRNA] OF 1-166</scope>
</reference>
<accession>A3KQH2</accession>
<comment type="function">
    <text evidence="1 5">Component of the nexin-dynein regulatory complex (N-DRC), a key regulator of ciliary/flagellar motility which maintains the alignment and integrity of the distal axoneme and regulates microtubule sliding in motile axonemes (By similarity). Binds calmodulin when cellular Ca(2+) levels are low and thereby contributes to the regulation of calcium and calmodulin-dependent protein kinase IV (camk4) activity; contributes to the regulation of camk4 signaling cascades. Plays a role in the regulation of definitive hematopoiesis via its effects on camk4 (PubMed:24787902).</text>
</comment>
<comment type="subunit">
    <text evidence="1 5">Component of the nexin-dynein regulatory complex (N-DRC) (By similarity). Interacts (via IQ domain) with calmodulin when calcium levels are low. Does not interact with calmodulin in the presence of Ca(2+). Interacts with hsp70 and may form a complex with camk4 and hsp70 (PubMed:24787902).</text>
</comment>
<comment type="subcellular location">
    <subcellularLocation>
        <location evidence="2">Cytoplasm</location>
    </subcellularLocation>
    <subcellularLocation>
        <location evidence="2">Cell projection</location>
        <location evidence="2">Cilium</location>
        <location evidence="2">Flagellum</location>
    </subcellularLocation>
    <subcellularLocation>
        <location evidence="2">Cell projection</location>
        <location evidence="2">Cilium</location>
    </subcellularLocation>
    <subcellularLocation>
        <location evidence="2">Cytoplasm</location>
        <location evidence="2">Cytoskeleton</location>
    </subcellularLocation>
    <subcellularLocation>
        <location evidence="1">Cytoplasm</location>
        <location evidence="1">Cytoskeleton</location>
        <location evidence="1">Flagellum axoneme</location>
    </subcellularLocation>
</comment>
<comment type="tissue specificity">
    <text evidence="5">Detected in adult testis, and at lower levels in brain, kidney and ovary.</text>
</comment>
<comment type="domain">
    <text evidence="5">The IQ domain mediates interaction with calmodulin when cellular Ca(2+) levels are low.</text>
</comment>
<comment type="disruption phenotype">
    <text evidence="5">Morpholino knockdown of the protein leads to a severe reduction in the size of the caudal hematopoietic tissue at 72 hpf, a strong reduction in the number of myb-positive hematopoietic stem cells, and results in impaired definitive hematopoiesis. Contrary to wild-type, the expression of monocyte, macrophage and lymphoblast markers is strongly reduced. Likewise, hemoglobin levels are strongly reduced, suggesting impaired erythropoiesis.</text>
</comment>
<comment type="similarity">
    <text evidence="7">Belongs to the DRC9 family.</text>
</comment>
<evidence type="ECO:0000250" key="1">
    <source>
        <dbReference type="UniProtKB" id="A8HQ54"/>
    </source>
</evidence>
<evidence type="ECO:0000250" key="2">
    <source>
        <dbReference type="UniProtKB" id="Q80W32"/>
    </source>
</evidence>
<evidence type="ECO:0000255" key="3">
    <source>
        <dbReference type="PROSITE-ProRule" id="PRU00116"/>
    </source>
</evidence>
<evidence type="ECO:0000256" key="4">
    <source>
        <dbReference type="SAM" id="MobiDB-lite"/>
    </source>
</evidence>
<evidence type="ECO:0000269" key="5">
    <source>
    </source>
</evidence>
<evidence type="ECO:0000303" key="6">
    <source>
    </source>
</evidence>
<evidence type="ECO:0000305" key="7"/>
<evidence type="ECO:0000312" key="8">
    <source>
        <dbReference type="Proteomes" id="UP000000437"/>
    </source>
</evidence>
<evidence type="ECO:0000312" key="9">
    <source>
        <dbReference type="ZFIN" id="ZDB-GENE-050419-109"/>
    </source>
</evidence>
<dbReference type="EMBL" id="BX649600">
    <property type="status" value="NOT_ANNOTATED_CDS"/>
    <property type="molecule type" value="Genomic_DNA"/>
</dbReference>
<dbReference type="EMBL" id="BX908394">
    <property type="status" value="NOT_ANNOTATED_CDS"/>
    <property type="molecule type" value="Genomic_DNA"/>
</dbReference>
<dbReference type="EMBL" id="CO359834">
    <property type="status" value="NOT_ANNOTATED_CDS"/>
    <property type="molecule type" value="mRNA"/>
</dbReference>
<dbReference type="RefSeq" id="NP_001333169.1">
    <property type="nucleotide sequence ID" value="NM_001346240.1"/>
</dbReference>
<dbReference type="RefSeq" id="XP_068070804.1">
    <property type="nucleotide sequence ID" value="XM_068214703.1"/>
</dbReference>
<dbReference type="SMR" id="A3KQH2"/>
<dbReference type="FunCoup" id="A3KQH2">
    <property type="interactions" value="292"/>
</dbReference>
<dbReference type="STRING" id="7955.ENSDARP00000144131"/>
<dbReference type="PaxDb" id="7955-ENSDARP00000090196"/>
<dbReference type="Ensembl" id="ENSDART00000175259">
    <property type="protein sequence ID" value="ENSDARP00000144131"/>
    <property type="gene ID" value="ENSDARG00000068678"/>
</dbReference>
<dbReference type="GeneID" id="100322600"/>
<dbReference type="KEGG" id="dre:100322600"/>
<dbReference type="AGR" id="ZFIN:ZDB-GENE-050419-109"/>
<dbReference type="CTD" id="84223"/>
<dbReference type="ZFIN" id="ZDB-GENE-050419-109">
    <property type="gene designation" value="iqcg"/>
</dbReference>
<dbReference type="eggNOG" id="ENOG502QQR7">
    <property type="taxonomic scope" value="Eukaryota"/>
</dbReference>
<dbReference type="HOGENOM" id="CLU_052522_1_1_1"/>
<dbReference type="InParanoid" id="A3KQH2"/>
<dbReference type="OMA" id="QFEEMTI"/>
<dbReference type="OrthoDB" id="10254713at2759"/>
<dbReference type="PhylomeDB" id="A3KQH2"/>
<dbReference type="PRO" id="PR:A3KQH2"/>
<dbReference type="Proteomes" id="UP000000437">
    <property type="component" value="Chromosome 18"/>
</dbReference>
<dbReference type="Bgee" id="ENSDARG00000068678">
    <property type="expression patterns" value="Expressed in testis and 17 other cell types or tissues"/>
</dbReference>
<dbReference type="ExpressionAtlas" id="A3KQH2">
    <property type="expression patterns" value="baseline"/>
</dbReference>
<dbReference type="GO" id="GO:0005737">
    <property type="term" value="C:cytoplasm"/>
    <property type="evidence" value="ECO:0000318"/>
    <property type="project" value="GO_Central"/>
</dbReference>
<dbReference type="GO" id="GO:0005856">
    <property type="term" value="C:cytoskeleton"/>
    <property type="evidence" value="ECO:0007669"/>
    <property type="project" value="UniProtKB-SubCell"/>
</dbReference>
<dbReference type="GO" id="GO:0031514">
    <property type="term" value="C:motile cilium"/>
    <property type="evidence" value="ECO:0000314"/>
    <property type="project" value="ZFIN"/>
</dbReference>
<dbReference type="GO" id="GO:0036126">
    <property type="term" value="C:sperm flagellum"/>
    <property type="evidence" value="ECO:0000318"/>
    <property type="project" value="GO_Central"/>
</dbReference>
<dbReference type="GO" id="GO:0005516">
    <property type="term" value="F:calmodulin binding"/>
    <property type="evidence" value="ECO:0007669"/>
    <property type="project" value="UniProtKB-KW"/>
</dbReference>
<dbReference type="GO" id="GO:0044782">
    <property type="term" value="P:cilium organization"/>
    <property type="evidence" value="ECO:0000318"/>
    <property type="project" value="GO_Central"/>
</dbReference>
<dbReference type="GO" id="GO:0060216">
    <property type="term" value="P:definitive hemopoiesis"/>
    <property type="evidence" value="ECO:0000315"/>
    <property type="project" value="ZFIN"/>
</dbReference>
<dbReference type="GO" id="GO:0007288">
    <property type="term" value="P:sperm axoneme assembly"/>
    <property type="evidence" value="ECO:0000318"/>
    <property type="project" value="GO_Central"/>
</dbReference>
<dbReference type="CDD" id="cd23766">
    <property type="entry name" value="IQCG"/>
    <property type="match status" value="1"/>
</dbReference>
<dbReference type="Gene3D" id="1.20.5.190">
    <property type="match status" value="1"/>
</dbReference>
<dbReference type="InterPro" id="IPR000048">
    <property type="entry name" value="IQ_motif_EF-hand-BS"/>
</dbReference>
<dbReference type="InterPro" id="IPR042618">
    <property type="entry name" value="IQCG"/>
</dbReference>
<dbReference type="PANTHER" id="PTHR14871">
    <property type="entry name" value="DYNEIN REGULATORY COMPLEX PROTEIN 9"/>
    <property type="match status" value="1"/>
</dbReference>
<dbReference type="PANTHER" id="PTHR14871:SF1">
    <property type="entry name" value="DYNEIN REGULATORY COMPLEX PROTEIN 9"/>
    <property type="match status" value="1"/>
</dbReference>
<dbReference type="Pfam" id="PF00612">
    <property type="entry name" value="IQ"/>
    <property type="match status" value="1"/>
</dbReference>
<dbReference type="SMART" id="SM00015">
    <property type="entry name" value="IQ"/>
    <property type="match status" value="1"/>
</dbReference>
<dbReference type="PROSITE" id="PS50096">
    <property type="entry name" value="IQ"/>
    <property type="match status" value="1"/>
</dbReference>
<gene>
    <name evidence="9" type="primary">iqcg</name>
    <name evidence="1" type="synonym">drc9</name>
    <name evidence="9" type="synonym">si:ch211-222m18.3</name>
</gene>
<keyword id="KW-0112">Calmodulin-binding</keyword>
<keyword id="KW-0966">Cell projection</keyword>
<keyword id="KW-0969">Cilium</keyword>
<keyword id="KW-0963">Cytoplasm</keyword>
<keyword id="KW-0206">Cytoskeleton</keyword>
<keyword id="KW-0221">Differentiation</keyword>
<keyword id="KW-0282">Flagellum</keyword>
<keyword id="KW-1185">Reference proteome</keyword>
<organism evidence="8">
    <name type="scientific">Danio rerio</name>
    <name type="common">Zebrafish</name>
    <name type="synonym">Brachydanio rerio</name>
    <dbReference type="NCBI Taxonomy" id="7955"/>
    <lineage>
        <taxon>Eukaryota</taxon>
        <taxon>Metazoa</taxon>
        <taxon>Chordata</taxon>
        <taxon>Craniata</taxon>
        <taxon>Vertebrata</taxon>
        <taxon>Euteleostomi</taxon>
        <taxon>Actinopterygii</taxon>
        <taxon>Neopterygii</taxon>
        <taxon>Teleostei</taxon>
        <taxon>Ostariophysi</taxon>
        <taxon>Cypriniformes</taxon>
        <taxon>Danionidae</taxon>
        <taxon>Danioninae</taxon>
        <taxon>Danio</taxon>
    </lineage>
</organism>
<proteinExistence type="evidence at protein level"/>
<feature type="chain" id="PRO_0000436997" description="Dynein regulatory complex protein 9">
    <location>
        <begin position="1"/>
        <end position="346"/>
    </location>
</feature>
<feature type="domain" description="IQ" evidence="3">
    <location>
        <begin position="305"/>
        <end position="334"/>
    </location>
</feature>
<feature type="region of interest" description="Disordered" evidence="4">
    <location>
        <begin position="299"/>
        <end position="346"/>
    </location>
</feature>
<feature type="compositionally biased region" description="Basic and acidic residues" evidence="4">
    <location>
        <begin position="299"/>
        <end position="308"/>
    </location>
</feature>
<feature type="compositionally biased region" description="Basic residues" evidence="4">
    <location>
        <begin position="323"/>
        <end position="346"/>
    </location>
</feature>
<feature type="mutagenesis site" description="Loss of calmodulin binding." evidence="5">
    <original>Q</original>
    <variation>A</variation>
    <location>
        <position position="313"/>
    </location>
</feature>
<sequence length="346" mass="40662">MTSVEELRACALLQDCADQLSVLGNIIRPGAETQQRTELHLKTAQLMAGSSLSNFSGELKSQKHFKIQQTLLASDNLAKVQKDRQFVSDVINALLEELQKKNNFQSLFSAVAEERKKKAELLDIINREEEGRRQIKKLQKQLLDIRKEKTEECERLEEEVAILKDQVQDMRVRTNQQGKFVKSCAEQLVYQESKHNSYKENELEDEVKMLQEKIEEEKNVHFETEAFLKQQHANLKQKLQYWIHRYEKDMEEKEQEITALQNKRNSSQTRIQDLSKKCKDMENVVIEDRIEKEHLRAQMEKEQREKNAATKIQAWWRGTLVRKGPRSKKADKSKKKDGKKGKKKRK</sequence>
<name>DRC9_DANRE</name>
<protein>
    <recommendedName>
        <fullName evidence="1">Dynein regulatory complex protein 9</fullName>
    </recommendedName>
    <alternativeName>
        <fullName evidence="6">IQ domain-containing protein G</fullName>
    </alternativeName>
</protein>